<gene>
    <name type="ORF">ORF135</name>
    <name evidence="6" type="ORF">T5.146</name>
    <name evidence="7" type="ORF">T5p142</name>
</gene>
<protein>
    <recommendedName>
        <fullName evidence="3">Tail tube terminator protein p142</fullName>
        <shortName evidence="4">TrP-142</shortName>
    </recommendedName>
    <alternativeName>
        <fullName evidence="3">Tail protein p142</fullName>
    </alternativeName>
    <alternativeName>
        <fullName evidence="4">Tail-to-head joining protein p142</fullName>
        <shortName>THJP</shortName>
    </alternativeName>
</protein>
<proteinExistence type="evidence at protein level"/>
<feature type="chain" id="PRO_0000432943" description="Tail tube terminator protein p142">
    <location>
        <begin position="1"/>
        <end position="161"/>
    </location>
</feature>
<comment type="function">
    <text evidence="2 5">Plays an essential role in tail assembly by capping the rapidly polymerizing tail once it has reached its requisite length.</text>
</comment>
<comment type="subunit">
    <text evidence="2">Homohexamer.</text>
</comment>
<comment type="subcellular location">
    <subcellularLocation>
        <location evidence="1 2">Virion</location>
    </subcellularLocation>
    <text evidence="1 2">Component of the tail (PubMed:24198424, PubMed:36961893). Located between the last TTP-pb6 ring and the phage capsid connector (PubMed:36961893).</text>
</comment>
<organism>
    <name type="scientific">Escherichia phage T5</name>
    <name type="common">Enterobacteria phage T5</name>
    <dbReference type="NCBI Taxonomy" id="2695836"/>
    <lineage>
        <taxon>Viruses</taxon>
        <taxon>Duplodnaviria</taxon>
        <taxon>Heunggongvirae</taxon>
        <taxon>Uroviricota</taxon>
        <taxon>Caudoviricetes</taxon>
        <taxon>Demerecviridae</taxon>
        <taxon>Markadamsvirinae</taxon>
        <taxon>Tequintavirus</taxon>
        <taxon>Tequintavirus T5</taxon>
    </lineage>
</organism>
<accession>Q6QGE1</accession>
<dbReference type="EMBL" id="AY543070">
    <property type="protein sequence ID" value="AAS77185.1"/>
    <property type="molecule type" value="Genomic_DNA"/>
</dbReference>
<dbReference type="EMBL" id="AY692264">
    <property type="protein sequence ID" value="AAU05281.1"/>
    <property type="molecule type" value="Genomic_DNA"/>
</dbReference>
<dbReference type="EMBL" id="AY587007">
    <property type="protein sequence ID" value="AAX12072.1"/>
    <property type="molecule type" value="Genomic_DNA"/>
</dbReference>
<dbReference type="RefSeq" id="YP_006974.1">
    <property type="nucleotide sequence ID" value="NC_005859.1"/>
</dbReference>
<dbReference type="PDB" id="8BCP">
    <property type="method" value="EM"/>
    <property type="resolution" value="3.88 A"/>
    <property type="chains" value="A/B/C/D/E/F=1-161"/>
</dbReference>
<dbReference type="PDB" id="8BCU">
    <property type="method" value="EM"/>
    <property type="resolution" value="4.05 A"/>
    <property type="chains" value="A/B/C/D/E/F=1-161"/>
</dbReference>
<dbReference type="PDB" id="9ILV">
    <property type="method" value="EM"/>
    <property type="resolution" value="4.80 A"/>
    <property type="chains" value="A/B/C/D/E/F=1-161"/>
</dbReference>
<dbReference type="PDB" id="9IMH">
    <property type="method" value="EM"/>
    <property type="resolution" value="4.20 A"/>
    <property type="chains" value="A/B/C/D/E/F=1-161"/>
</dbReference>
<dbReference type="PDBsum" id="8BCP"/>
<dbReference type="PDBsum" id="8BCU"/>
<dbReference type="PDBsum" id="9ILV"/>
<dbReference type="PDBsum" id="9IMH"/>
<dbReference type="EMDB" id="EMD-15967"/>
<dbReference type="EMDB" id="EMD-15968"/>
<dbReference type="EMDB" id="EMD-60675"/>
<dbReference type="EMDB" id="EMD-60689"/>
<dbReference type="SMR" id="Q6QGE1"/>
<dbReference type="GeneID" id="2777635"/>
<dbReference type="KEGG" id="vg:2777635"/>
<dbReference type="Proteomes" id="UP000002107">
    <property type="component" value="Genome"/>
</dbReference>
<dbReference type="Proteomes" id="UP000002141">
    <property type="component" value="Segment"/>
</dbReference>
<dbReference type="Proteomes" id="UP000002503">
    <property type="component" value="Segment"/>
</dbReference>
<dbReference type="GO" id="GO:0098015">
    <property type="term" value="C:virus tail"/>
    <property type="evidence" value="ECO:0000314"/>
    <property type="project" value="UniProtKB"/>
</dbReference>
<dbReference type="GO" id="GO:0099001">
    <property type="term" value="P:symbiont genome ejection through host cell envelope, long flexible tail mechanism"/>
    <property type="evidence" value="ECO:0007669"/>
    <property type="project" value="UniProtKB-KW"/>
</dbReference>
<dbReference type="GO" id="GO:0098003">
    <property type="term" value="P:viral tail assembly"/>
    <property type="evidence" value="ECO:0007669"/>
    <property type="project" value="UniProtKB-KW"/>
</dbReference>
<dbReference type="InterPro" id="IPR056418">
    <property type="entry name" value="Phage_tail_terminator_p142"/>
</dbReference>
<dbReference type="Pfam" id="PF23818">
    <property type="entry name" value="Phage_tail_terminator_7"/>
    <property type="match status" value="1"/>
</dbReference>
<evidence type="ECO:0000269" key="1">
    <source>
    </source>
</evidence>
<evidence type="ECO:0000269" key="2">
    <source>
    </source>
</evidence>
<evidence type="ECO:0000303" key="3">
    <source>
    </source>
</evidence>
<evidence type="ECO:0000305" key="4"/>
<evidence type="ECO:0000305" key="5">
    <source>
    </source>
</evidence>
<evidence type="ECO:0000312" key="6">
    <source>
        <dbReference type="EMBL" id="AAS77185.1"/>
    </source>
</evidence>
<evidence type="ECO:0000312" key="7">
    <source>
        <dbReference type="EMBL" id="AAU05281.1"/>
    </source>
</evidence>
<reference key="1">
    <citation type="submission" date="2004-01" db="EMBL/GenBank/DDBJ databases">
        <title>Bacteriophage T5 complete genome.</title>
        <authorList>
            <person name="Ksenzenko V.N."/>
            <person name="Kaliman A.V."/>
            <person name="Krutilina A.I."/>
            <person name="Shlyapnikov M.G."/>
        </authorList>
    </citation>
    <scope>NUCLEOTIDE SEQUENCE [GENOMIC DNA]</scope>
</reference>
<reference key="2">
    <citation type="journal article" date="2005" name="Virology">
        <title>Complete genome sequence of bacteriophage T5.</title>
        <authorList>
            <person name="Wang J."/>
            <person name="Jiang Y."/>
            <person name="Vincent M."/>
            <person name="Sun Y."/>
            <person name="Yu H."/>
            <person name="Wang J."/>
            <person name="Bao Q."/>
            <person name="Kong H."/>
            <person name="Hu S."/>
        </authorList>
    </citation>
    <scope>NUCLEOTIDE SEQUENCE [LARGE SCALE GENOMIC DNA]</scope>
    <scope>INDUCTION</scope>
    <source>
        <strain>ATCC 11303-B5</strain>
    </source>
</reference>
<reference key="3">
    <citation type="journal article" date="2014" name="J. Virol.">
        <title>Insights into bacteriophage T5 structure from analysis of its morphogenesis genes and protein components.</title>
        <authorList>
            <person name="Zivanovic Y."/>
            <person name="Confalonieri F."/>
            <person name="Ponchon L."/>
            <person name="Lurz R."/>
            <person name="Chami M."/>
            <person name="Flayhan A."/>
            <person name="Renouard M."/>
            <person name="Huet A."/>
            <person name="Decottignies P."/>
            <person name="Davidson A.R."/>
            <person name="Breyton C."/>
            <person name="Boulanger P."/>
        </authorList>
    </citation>
    <scope>NUCLEOTIDE SEQUENCE [LARGE SCALE GENOMIC DNA]</scope>
    <scope>SUBCELLULAR LOCATION</scope>
    <scope>FUNCTION</scope>
    <source>
        <strain>St0 deletion mutant</strain>
    </source>
</reference>
<reference key="4">
    <citation type="journal article" date="2023" name="Sci. Adv.">
        <title>Structural basis of bacteriophage T5 infection trigger and E. coli cell wall perforation.</title>
        <authorList>
            <person name="Linares R."/>
            <person name="Arnaud C.A."/>
            <person name="Effantin G."/>
            <person name="Darnault C."/>
            <person name="Epalle N.H."/>
            <person name="Boeri Erba E."/>
            <person name="Schoehn G."/>
            <person name="Breyton C."/>
        </authorList>
    </citation>
    <scope>SUBCELLULAR LOCATION</scope>
    <scope>FUNCTION</scope>
    <scope>SUBUNIT</scope>
</reference>
<keyword id="KW-0002">3D-structure</keyword>
<keyword id="KW-0426">Late protein</keyword>
<keyword id="KW-1185">Reference proteome</keyword>
<keyword id="KW-1171">Viral genome ejection through host cell envelope</keyword>
<keyword id="KW-1243">Viral long flexible tail ejection system</keyword>
<keyword id="KW-1162">Viral penetration into host cytoplasm</keyword>
<keyword id="KW-1188">Viral release from host cell</keyword>
<keyword id="KW-1245">Viral tail assembly</keyword>
<keyword id="KW-1227">Viral tail protein</keyword>
<keyword id="KW-0946">Virion</keyword>
<keyword id="KW-1160">Virus entry into host cell</keyword>
<sequence length="161" mass="18361">MDHRTSIAQAMVDRISKQMDGSQPDEYFNNLYGNVSRQTYKFEEIREFPYVAVHIGTETGQYLPSGQQWMFLELPILVYDKEKTDIQEQLEKLVADIKTVIDTGGNLEYTVSKPNGSTFPCEATDMIITSVSTDEGLLAPYGLAEINVTVRYQPPRRSLRR</sequence>
<organismHost>
    <name type="scientific">Escherichia coli</name>
    <dbReference type="NCBI Taxonomy" id="562"/>
</organismHost>
<name>TTTP_BPT5</name>